<protein>
    <recommendedName>
        <fullName evidence="1">Threonine--tRNA ligase</fullName>
        <ecNumber evidence="1">6.1.1.3</ecNumber>
    </recommendedName>
    <alternativeName>
        <fullName evidence="1">Threonyl-tRNA synthetase</fullName>
        <shortName evidence="1">ThrRS</shortName>
    </alternativeName>
</protein>
<accession>B1W3F0</accession>
<feature type="chain" id="PRO_1000098615" description="Threonine--tRNA ligase">
    <location>
        <begin position="1"/>
        <end position="658"/>
    </location>
</feature>
<feature type="domain" description="TGS" evidence="2">
    <location>
        <begin position="1"/>
        <end position="61"/>
    </location>
</feature>
<feature type="region of interest" description="Catalytic" evidence="1">
    <location>
        <begin position="259"/>
        <end position="554"/>
    </location>
</feature>
<feature type="binding site" evidence="1">
    <location>
        <position position="353"/>
    </location>
    <ligand>
        <name>Zn(2+)</name>
        <dbReference type="ChEBI" id="CHEBI:29105"/>
    </ligand>
</feature>
<feature type="binding site" evidence="1">
    <location>
        <position position="404"/>
    </location>
    <ligand>
        <name>Zn(2+)</name>
        <dbReference type="ChEBI" id="CHEBI:29105"/>
    </ligand>
</feature>
<feature type="binding site" evidence="1">
    <location>
        <position position="531"/>
    </location>
    <ligand>
        <name>Zn(2+)</name>
        <dbReference type="ChEBI" id="CHEBI:29105"/>
    </ligand>
</feature>
<gene>
    <name evidence="1" type="primary">thrS</name>
    <name type="ordered locus">SGR_6003</name>
</gene>
<proteinExistence type="inferred from homology"/>
<keyword id="KW-0030">Aminoacyl-tRNA synthetase</keyword>
<keyword id="KW-0067">ATP-binding</keyword>
<keyword id="KW-0963">Cytoplasm</keyword>
<keyword id="KW-0436">Ligase</keyword>
<keyword id="KW-0479">Metal-binding</keyword>
<keyword id="KW-0547">Nucleotide-binding</keyword>
<keyword id="KW-0648">Protein biosynthesis</keyword>
<keyword id="KW-0694">RNA-binding</keyword>
<keyword id="KW-0820">tRNA-binding</keyword>
<keyword id="KW-0862">Zinc</keyword>
<name>SYT_STRGG</name>
<dbReference type="EC" id="6.1.1.3" evidence="1"/>
<dbReference type="EMBL" id="AP009493">
    <property type="protein sequence ID" value="BAG22832.1"/>
    <property type="molecule type" value="Genomic_DNA"/>
</dbReference>
<dbReference type="RefSeq" id="WP_012381665.1">
    <property type="nucleotide sequence ID" value="NC_010572.1"/>
</dbReference>
<dbReference type="SMR" id="B1W3F0"/>
<dbReference type="KEGG" id="sgr:SGR_6003"/>
<dbReference type="PATRIC" id="fig|455632.4.peg.6154"/>
<dbReference type="eggNOG" id="COG0441">
    <property type="taxonomic scope" value="Bacteria"/>
</dbReference>
<dbReference type="HOGENOM" id="CLU_008554_3_1_11"/>
<dbReference type="Proteomes" id="UP000001685">
    <property type="component" value="Chromosome"/>
</dbReference>
<dbReference type="GO" id="GO:0005737">
    <property type="term" value="C:cytoplasm"/>
    <property type="evidence" value="ECO:0007669"/>
    <property type="project" value="UniProtKB-SubCell"/>
</dbReference>
<dbReference type="GO" id="GO:0005524">
    <property type="term" value="F:ATP binding"/>
    <property type="evidence" value="ECO:0007669"/>
    <property type="project" value="UniProtKB-UniRule"/>
</dbReference>
<dbReference type="GO" id="GO:0046872">
    <property type="term" value="F:metal ion binding"/>
    <property type="evidence" value="ECO:0007669"/>
    <property type="project" value="UniProtKB-KW"/>
</dbReference>
<dbReference type="GO" id="GO:0004829">
    <property type="term" value="F:threonine-tRNA ligase activity"/>
    <property type="evidence" value="ECO:0007669"/>
    <property type="project" value="UniProtKB-UniRule"/>
</dbReference>
<dbReference type="GO" id="GO:0000049">
    <property type="term" value="F:tRNA binding"/>
    <property type="evidence" value="ECO:0007669"/>
    <property type="project" value="UniProtKB-KW"/>
</dbReference>
<dbReference type="GO" id="GO:0006435">
    <property type="term" value="P:threonyl-tRNA aminoacylation"/>
    <property type="evidence" value="ECO:0007669"/>
    <property type="project" value="UniProtKB-UniRule"/>
</dbReference>
<dbReference type="CDD" id="cd00860">
    <property type="entry name" value="ThrRS_anticodon"/>
    <property type="match status" value="1"/>
</dbReference>
<dbReference type="CDD" id="cd00771">
    <property type="entry name" value="ThrRS_core"/>
    <property type="match status" value="1"/>
</dbReference>
<dbReference type="FunFam" id="3.30.54.20:FF:000003">
    <property type="entry name" value="Threonine--tRNA ligase"/>
    <property type="match status" value="1"/>
</dbReference>
<dbReference type="FunFam" id="3.30.930.10:FF:000019">
    <property type="entry name" value="Threonine--tRNA ligase"/>
    <property type="match status" value="1"/>
</dbReference>
<dbReference type="FunFam" id="3.40.50.800:FF:000001">
    <property type="entry name" value="Threonine--tRNA ligase"/>
    <property type="match status" value="1"/>
</dbReference>
<dbReference type="FunFam" id="3.30.980.10:FF:000005">
    <property type="entry name" value="Threonyl-tRNA synthetase, mitochondrial"/>
    <property type="match status" value="1"/>
</dbReference>
<dbReference type="Gene3D" id="3.30.54.20">
    <property type="match status" value="1"/>
</dbReference>
<dbReference type="Gene3D" id="3.40.50.800">
    <property type="entry name" value="Anticodon-binding domain"/>
    <property type="match status" value="1"/>
</dbReference>
<dbReference type="Gene3D" id="3.30.930.10">
    <property type="entry name" value="Bira Bifunctional Protein, Domain 2"/>
    <property type="match status" value="1"/>
</dbReference>
<dbReference type="Gene3D" id="3.30.980.10">
    <property type="entry name" value="Threonyl-trna Synthetase, Chain A, domain 2"/>
    <property type="match status" value="1"/>
</dbReference>
<dbReference type="HAMAP" id="MF_00184">
    <property type="entry name" value="Thr_tRNA_synth"/>
    <property type="match status" value="1"/>
</dbReference>
<dbReference type="InterPro" id="IPR002314">
    <property type="entry name" value="aa-tRNA-synt_IIb"/>
</dbReference>
<dbReference type="InterPro" id="IPR006195">
    <property type="entry name" value="aa-tRNA-synth_II"/>
</dbReference>
<dbReference type="InterPro" id="IPR045864">
    <property type="entry name" value="aa-tRNA-synth_II/BPL/LPL"/>
</dbReference>
<dbReference type="InterPro" id="IPR004154">
    <property type="entry name" value="Anticodon-bd"/>
</dbReference>
<dbReference type="InterPro" id="IPR036621">
    <property type="entry name" value="Anticodon-bd_dom_sf"/>
</dbReference>
<dbReference type="InterPro" id="IPR004095">
    <property type="entry name" value="TGS"/>
</dbReference>
<dbReference type="InterPro" id="IPR002320">
    <property type="entry name" value="Thr-tRNA-ligase_IIa"/>
</dbReference>
<dbReference type="InterPro" id="IPR018163">
    <property type="entry name" value="Thr/Ala-tRNA-synth_IIc_edit"/>
</dbReference>
<dbReference type="InterPro" id="IPR047246">
    <property type="entry name" value="ThrRS_anticodon"/>
</dbReference>
<dbReference type="InterPro" id="IPR033728">
    <property type="entry name" value="ThrRS_core"/>
</dbReference>
<dbReference type="InterPro" id="IPR012947">
    <property type="entry name" value="tRNA_SAD"/>
</dbReference>
<dbReference type="NCBIfam" id="TIGR00418">
    <property type="entry name" value="thrS"/>
    <property type="match status" value="1"/>
</dbReference>
<dbReference type="PANTHER" id="PTHR11451:SF44">
    <property type="entry name" value="THREONINE--TRNA LIGASE, CHLOROPLASTIC_MITOCHONDRIAL 2"/>
    <property type="match status" value="1"/>
</dbReference>
<dbReference type="PANTHER" id="PTHR11451">
    <property type="entry name" value="THREONINE-TRNA LIGASE"/>
    <property type="match status" value="1"/>
</dbReference>
<dbReference type="Pfam" id="PF03129">
    <property type="entry name" value="HGTP_anticodon"/>
    <property type="match status" value="1"/>
</dbReference>
<dbReference type="Pfam" id="PF00587">
    <property type="entry name" value="tRNA-synt_2b"/>
    <property type="match status" value="1"/>
</dbReference>
<dbReference type="Pfam" id="PF07973">
    <property type="entry name" value="tRNA_SAD"/>
    <property type="match status" value="1"/>
</dbReference>
<dbReference type="PRINTS" id="PR01047">
    <property type="entry name" value="TRNASYNTHTHR"/>
</dbReference>
<dbReference type="SMART" id="SM00863">
    <property type="entry name" value="tRNA_SAD"/>
    <property type="match status" value="1"/>
</dbReference>
<dbReference type="SUPFAM" id="SSF52954">
    <property type="entry name" value="Class II aaRS ABD-related"/>
    <property type="match status" value="1"/>
</dbReference>
<dbReference type="SUPFAM" id="SSF55681">
    <property type="entry name" value="Class II aaRS and biotin synthetases"/>
    <property type="match status" value="1"/>
</dbReference>
<dbReference type="SUPFAM" id="SSF55186">
    <property type="entry name" value="ThrRS/AlaRS common domain"/>
    <property type="match status" value="1"/>
</dbReference>
<dbReference type="PROSITE" id="PS50862">
    <property type="entry name" value="AA_TRNA_LIGASE_II"/>
    <property type="match status" value="1"/>
</dbReference>
<dbReference type="PROSITE" id="PS51880">
    <property type="entry name" value="TGS"/>
    <property type="match status" value="1"/>
</dbReference>
<organism>
    <name type="scientific">Streptomyces griseus subsp. griseus (strain JCM 4626 / CBS 651.72 / NBRC 13350 / KCC S-0626 / ISP 5235)</name>
    <dbReference type="NCBI Taxonomy" id="455632"/>
    <lineage>
        <taxon>Bacteria</taxon>
        <taxon>Bacillati</taxon>
        <taxon>Actinomycetota</taxon>
        <taxon>Actinomycetes</taxon>
        <taxon>Kitasatosporales</taxon>
        <taxon>Streptomycetaceae</taxon>
        <taxon>Streptomyces</taxon>
    </lineage>
</organism>
<evidence type="ECO:0000255" key="1">
    <source>
        <dbReference type="HAMAP-Rule" id="MF_00184"/>
    </source>
</evidence>
<evidence type="ECO:0000255" key="2">
    <source>
        <dbReference type="PROSITE-ProRule" id="PRU01228"/>
    </source>
</evidence>
<sequence>MSDVRVIIQRDSEREEHVVTTGTTAGELFPGQRTVVAARIGGELKDLSYELRDGESVEPVEISSEDGLNILRHSTAHVMAQAVQELFPEAKLGIGPPVKDGFYYDFDVEKPFTPEDLKAIEKKMQEIQKRGQKFSRRVVSDEAAREELADEPYKLELIGIKGSASSDDGADVEVGGGELTIYDNLDPKTGDLCWKDLCRGPHLPTTRFIPAFKLMRNAAAYWRGSEKNPMLQRIYGTAWPTKDELKAHLEFLEEAAKRDHRKLGNELDLFSFPDEIGPGLAVFHPKGGVIRRAMEDYSRRRHEEEGYEFVYSPHATKGKLFEKSGHLDWYADGMYPPMQLDDGVDYYLKPMNCPMHNLIFDARGRSYRELPLRLFEFGTVYRYEKSGVVHGLTRSRGFTQDDAHIYCTKEQMAEELDRTLTFVLNLLRDYGLTDFYLELSTKDPEKYVGSDETWEEATETLRQVAEKQGLPLVPDPGGAAFYGPKISVQCKDAIGRTWQMSTVQLDFNLPERFDLEYTGPDGSKQRPVMIHRALFGSIERFFAVLLEHYAGAFPVWLAPVQAVGIPIGDAHIPYLQEFAAKARKQGLRVDVDASSDRMQKKIRNQQKNKVPFMIIAGDEDMANGAVSFRYRDGSQENGIPVDEAIAKIAKAVEDRVQV</sequence>
<reference key="1">
    <citation type="journal article" date="2008" name="J. Bacteriol.">
        <title>Genome sequence of the streptomycin-producing microorganism Streptomyces griseus IFO 13350.</title>
        <authorList>
            <person name="Ohnishi Y."/>
            <person name="Ishikawa J."/>
            <person name="Hara H."/>
            <person name="Suzuki H."/>
            <person name="Ikenoya M."/>
            <person name="Ikeda H."/>
            <person name="Yamashita A."/>
            <person name="Hattori M."/>
            <person name="Horinouchi S."/>
        </authorList>
    </citation>
    <scope>NUCLEOTIDE SEQUENCE [LARGE SCALE GENOMIC DNA]</scope>
    <source>
        <strain>JCM 4626 / CBS 651.72 / NBRC 13350 / KCC S-0626 / ISP 5235</strain>
    </source>
</reference>
<comment type="function">
    <text evidence="1">Catalyzes the attachment of threonine to tRNA(Thr) in a two-step reaction: L-threonine is first activated by ATP to form Thr-AMP and then transferred to the acceptor end of tRNA(Thr). Also edits incorrectly charged L-seryl-tRNA(Thr).</text>
</comment>
<comment type="catalytic activity">
    <reaction evidence="1">
        <text>tRNA(Thr) + L-threonine + ATP = L-threonyl-tRNA(Thr) + AMP + diphosphate + H(+)</text>
        <dbReference type="Rhea" id="RHEA:24624"/>
        <dbReference type="Rhea" id="RHEA-COMP:9670"/>
        <dbReference type="Rhea" id="RHEA-COMP:9704"/>
        <dbReference type="ChEBI" id="CHEBI:15378"/>
        <dbReference type="ChEBI" id="CHEBI:30616"/>
        <dbReference type="ChEBI" id="CHEBI:33019"/>
        <dbReference type="ChEBI" id="CHEBI:57926"/>
        <dbReference type="ChEBI" id="CHEBI:78442"/>
        <dbReference type="ChEBI" id="CHEBI:78534"/>
        <dbReference type="ChEBI" id="CHEBI:456215"/>
        <dbReference type="EC" id="6.1.1.3"/>
    </reaction>
</comment>
<comment type="cofactor">
    <cofactor evidence="1">
        <name>Zn(2+)</name>
        <dbReference type="ChEBI" id="CHEBI:29105"/>
    </cofactor>
    <text evidence="1">Binds 1 zinc ion per subunit.</text>
</comment>
<comment type="subunit">
    <text evidence="1">Homodimer.</text>
</comment>
<comment type="subcellular location">
    <subcellularLocation>
        <location evidence="1">Cytoplasm</location>
    </subcellularLocation>
</comment>
<comment type="similarity">
    <text evidence="1">Belongs to the class-II aminoacyl-tRNA synthetase family.</text>
</comment>